<gene>
    <name evidence="1" type="primary">argB</name>
    <name type="ordered locus">Asuc_0254</name>
</gene>
<keyword id="KW-0028">Amino-acid biosynthesis</keyword>
<keyword id="KW-0055">Arginine biosynthesis</keyword>
<keyword id="KW-0067">ATP-binding</keyword>
<keyword id="KW-0963">Cytoplasm</keyword>
<keyword id="KW-0418">Kinase</keyword>
<keyword id="KW-0547">Nucleotide-binding</keyword>
<keyword id="KW-1185">Reference proteome</keyword>
<keyword id="KW-0808">Transferase</keyword>
<feature type="chain" id="PRO_1000071215" description="Acetylglutamate kinase">
    <location>
        <begin position="1"/>
        <end position="257"/>
    </location>
</feature>
<feature type="binding site" evidence="1">
    <location>
        <begin position="43"/>
        <end position="44"/>
    </location>
    <ligand>
        <name>substrate</name>
    </ligand>
</feature>
<feature type="binding site" evidence="1">
    <location>
        <position position="65"/>
    </location>
    <ligand>
        <name>substrate</name>
    </ligand>
</feature>
<feature type="binding site" evidence="1">
    <location>
        <position position="157"/>
    </location>
    <ligand>
        <name>substrate</name>
    </ligand>
</feature>
<feature type="site" description="Transition state stabilizer" evidence="1">
    <location>
        <position position="7"/>
    </location>
</feature>
<feature type="site" description="Transition state stabilizer" evidence="1">
    <location>
        <position position="216"/>
    </location>
</feature>
<name>ARGB_ACTSZ</name>
<reference key="1">
    <citation type="journal article" date="2010" name="BMC Genomics">
        <title>A genomic perspective on the potential of Actinobacillus succinogenes for industrial succinate production.</title>
        <authorList>
            <person name="McKinlay J.B."/>
            <person name="Laivenieks M."/>
            <person name="Schindler B.D."/>
            <person name="McKinlay A.A."/>
            <person name="Siddaramappa S."/>
            <person name="Challacombe J.F."/>
            <person name="Lowry S.R."/>
            <person name="Clum A."/>
            <person name="Lapidus A.L."/>
            <person name="Burkhart K.B."/>
            <person name="Harkins V."/>
            <person name="Vieille C."/>
        </authorList>
    </citation>
    <scope>NUCLEOTIDE SEQUENCE [LARGE SCALE GENOMIC DNA]</scope>
    <source>
        <strain>ATCC 55618 / DSM 22257 / CCUG 43843 / 130Z</strain>
    </source>
</reference>
<evidence type="ECO:0000255" key="1">
    <source>
        <dbReference type="HAMAP-Rule" id="MF_00082"/>
    </source>
</evidence>
<sequence>MRPLVIKLGGILLDTPAAMENLFNALAKYLQNSDRSLLIVHGGGCVVDDLMKRLNLPVRKKNGLRVTPSDQIDIIVGALAGIANKTLVAQAAKFKLNPVGLCLGDGELTAAKQFDPELGHVAGVIARNPALLDNLLSGGFLPIISSIAVDENGLLMNVNADQAATAIASLIDADLVMLSDVDGVLDADKTLLSELNSAQIARLIENKVITDGMIVKVNAALDAAKILNRGVDIANWKYPEKLTALFAGEIIGTRIAP</sequence>
<organism>
    <name type="scientific">Actinobacillus succinogenes (strain ATCC 55618 / DSM 22257 / CCUG 43843 / 130Z)</name>
    <dbReference type="NCBI Taxonomy" id="339671"/>
    <lineage>
        <taxon>Bacteria</taxon>
        <taxon>Pseudomonadati</taxon>
        <taxon>Pseudomonadota</taxon>
        <taxon>Gammaproteobacteria</taxon>
        <taxon>Pasteurellales</taxon>
        <taxon>Pasteurellaceae</taxon>
        <taxon>Actinobacillus</taxon>
    </lineage>
</organism>
<dbReference type="EC" id="2.7.2.8" evidence="1"/>
<dbReference type="EMBL" id="CP000746">
    <property type="protein sequence ID" value="ABR73633.1"/>
    <property type="molecule type" value="Genomic_DNA"/>
</dbReference>
<dbReference type="RefSeq" id="WP_011978909.1">
    <property type="nucleotide sequence ID" value="NC_009655.1"/>
</dbReference>
<dbReference type="SMR" id="A6VKY6"/>
<dbReference type="STRING" id="339671.Asuc_0254"/>
<dbReference type="KEGG" id="asu:Asuc_0254"/>
<dbReference type="eggNOG" id="COG0548">
    <property type="taxonomic scope" value="Bacteria"/>
</dbReference>
<dbReference type="HOGENOM" id="CLU_053680_1_1_6"/>
<dbReference type="OrthoDB" id="5915023at2"/>
<dbReference type="UniPathway" id="UPA00068">
    <property type="reaction ID" value="UER00107"/>
</dbReference>
<dbReference type="Proteomes" id="UP000001114">
    <property type="component" value="Chromosome"/>
</dbReference>
<dbReference type="GO" id="GO:0005737">
    <property type="term" value="C:cytoplasm"/>
    <property type="evidence" value="ECO:0007669"/>
    <property type="project" value="UniProtKB-SubCell"/>
</dbReference>
<dbReference type="GO" id="GO:0003991">
    <property type="term" value="F:acetylglutamate kinase activity"/>
    <property type="evidence" value="ECO:0007669"/>
    <property type="project" value="UniProtKB-UniRule"/>
</dbReference>
<dbReference type="GO" id="GO:0005524">
    <property type="term" value="F:ATP binding"/>
    <property type="evidence" value="ECO:0007669"/>
    <property type="project" value="UniProtKB-UniRule"/>
</dbReference>
<dbReference type="GO" id="GO:0042450">
    <property type="term" value="P:arginine biosynthetic process via ornithine"/>
    <property type="evidence" value="ECO:0007669"/>
    <property type="project" value="UniProtKB-UniRule"/>
</dbReference>
<dbReference type="GO" id="GO:0006526">
    <property type="term" value="P:L-arginine biosynthetic process"/>
    <property type="evidence" value="ECO:0007669"/>
    <property type="project" value="UniProtKB-UniPathway"/>
</dbReference>
<dbReference type="CDD" id="cd04249">
    <property type="entry name" value="AAK_NAGK-NC"/>
    <property type="match status" value="1"/>
</dbReference>
<dbReference type="Gene3D" id="3.40.1160.10">
    <property type="entry name" value="Acetylglutamate kinase-like"/>
    <property type="match status" value="1"/>
</dbReference>
<dbReference type="HAMAP" id="MF_00082">
    <property type="entry name" value="ArgB"/>
    <property type="match status" value="1"/>
</dbReference>
<dbReference type="InterPro" id="IPR036393">
    <property type="entry name" value="AceGlu_kinase-like_sf"/>
</dbReference>
<dbReference type="InterPro" id="IPR004662">
    <property type="entry name" value="AcgluKinase_fam"/>
</dbReference>
<dbReference type="InterPro" id="IPR037528">
    <property type="entry name" value="ArgB"/>
</dbReference>
<dbReference type="InterPro" id="IPR001048">
    <property type="entry name" value="Asp/Glu/Uridylate_kinase"/>
</dbReference>
<dbReference type="InterPro" id="IPR041731">
    <property type="entry name" value="NAGK-NC"/>
</dbReference>
<dbReference type="NCBIfam" id="TIGR00761">
    <property type="entry name" value="argB"/>
    <property type="match status" value="1"/>
</dbReference>
<dbReference type="PANTHER" id="PTHR23342">
    <property type="entry name" value="N-ACETYLGLUTAMATE SYNTHASE"/>
    <property type="match status" value="1"/>
</dbReference>
<dbReference type="PANTHER" id="PTHR23342:SF0">
    <property type="entry name" value="N-ACETYLGLUTAMATE SYNTHASE, MITOCHONDRIAL"/>
    <property type="match status" value="1"/>
</dbReference>
<dbReference type="Pfam" id="PF00696">
    <property type="entry name" value="AA_kinase"/>
    <property type="match status" value="1"/>
</dbReference>
<dbReference type="PIRSF" id="PIRSF000728">
    <property type="entry name" value="NAGK"/>
    <property type="match status" value="1"/>
</dbReference>
<dbReference type="SUPFAM" id="SSF53633">
    <property type="entry name" value="Carbamate kinase-like"/>
    <property type="match status" value="1"/>
</dbReference>
<protein>
    <recommendedName>
        <fullName evidence="1">Acetylglutamate kinase</fullName>
        <ecNumber evidence="1">2.7.2.8</ecNumber>
    </recommendedName>
    <alternativeName>
        <fullName evidence="1">N-acetyl-L-glutamate 5-phosphotransferase</fullName>
    </alternativeName>
    <alternativeName>
        <fullName evidence="1">NAG kinase</fullName>
        <shortName evidence="1">NAGK</shortName>
    </alternativeName>
</protein>
<accession>A6VKY6</accession>
<proteinExistence type="inferred from homology"/>
<comment type="function">
    <text evidence="1">Catalyzes the ATP-dependent phosphorylation of N-acetyl-L-glutamate.</text>
</comment>
<comment type="catalytic activity">
    <reaction evidence="1">
        <text>N-acetyl-L-glutamate + ATP = N-acetyl-L-glutamyl 5-phosphate + ADP</text>
        <dbReference type="Rhea" id="RHEA:14629"/>
        <dbReference type="ChEBI" id="CHEBI:30616"/>
        <dbReference type="ChEBI" id="CHEBI:44337"/>
        <dbReference type="ChEBI" id="CHEBI:57936"/>
        <dbReference type="ChEBI" id="CHEBI:456216"/>
        <dbReference type="EC" id="2.7.2.8"/>
    </reaction>
</comment>
<comment type="pathway">
    <text evidence="1">Amino-acid biosynthesis; L-arginine biosynthesis; N(2)-acetyl-L-ornithine from L-glutamate: step 2/4.</text>
</comment>
<comment type="subcellular location">
    <subcellularLocation>
        <location evidence="1">Cytoplasm</location>
    </subcellularLocation>
</comment>
<comment type="similarity">
    <text evidence="1">Belongs to the acetylglutamate kinase family. ArgB subfamily.</text>
</comment>